<dbReference type="EC" id="3.2.1.21"/>
<dbReference type="EMBL" id="DS027688">
    <property type="protein sequence ID" value="EAW22115.1"/>
    <property type="molecule type" value="Genomic_DNA"/>
</dbReference>
<dbReference type="RefSeq" id="XP_001264012.1">
    <property type="nucleotide sequence ID" value="XM_001264011.1"/>
</dbReference>
<dbReference type="SMR" id="A1D122"/>
<dbReference type="STRING" id="331117.A1D122"/>
<dbReference type="GlyCosmos" id="A1D122">
    <property type="glycosylation" value="7 sites, No reported glycans"/>
</dbReference>
<dbReference type="EnsemblFungi" id="EAW22115">
    <property type="protein sequence ID" value="EAW22115"/>
    <property type="gene ID" value="NFIA_007920"/>
</dbReference>
<dbReference type="GeneID" id="4592105"/>
<dbReference type="KEGG" id="nfi:NFIA_007920"/>
<dbReference type="VEuPathDB" id="FungiDB:NFIA_007920"/>
<dbReference type="eggNOG" id="ENOG502SMNU">
    <property type="taxonomic scope" value="Eukaryota"/>
</dbReference>
<dbReference type="HOGENOM" id="CLU_004542_2_1_1"/>
<dbReference type="OMA" id="PGLCVSD"/>
<dbReference type="OrthoDB" id="416222at2759"/>
<dbReference type="UniPathway" id="UPA00696"/>
<dbReference type="Proteomes" id="UP000006702">
    <property type="component" value="Unassembled WGS sequence"/>
</dbReference>
<dbReference type="GO" id="GO:0005576">
    <property type="term" value="C:extracellular region"/>
    <property type="evidence" value="ECO:0007669"/>
    <property type="project" value="UniProtKB-SubCell"/>
</dbReference>
<dbReference type="GO" id="GO:0008422">
    <property type="term" value="F:beta-glucosidase activity"/>
    <property type="evidence" value="ECO:0007669"/>
    <property type="project" value="UniProtKB-EC"/>
</dbReference>
<dbReference type="GO" id="GO:0030245">
    <property type="term" value="P:cellulose catabolic process"/>
    <property type="evidence" value="ECO:0007669"/>
    <property type="project" value="UniProtKB-UniPathway"/>
</dbReference>
<dbReference type="FunFam" id="3.40.50.1700:FF:000008">
    <property type="entry name" value="Beta-glucosidase"/>
    <property type="match status" value="1"/>
</dbReference>
<dbReference type="FunFam" id="2.60.40.10:FF:000757">
    <property type="entry name" value="Beta-glucosidase G"/>
    <property type="match status" value="1"/>
</dbReference>
<dbReference type="FunFam" id="3.20.20.300:FF:000002">
    <property type="entry name" value="Probable beta-glucosidase"/>
    <property type="match status" value="1"/>
</dbReference>
<dbReference type="Gene3D" id="3.40.50.1700">
    <property type="entry name" value="Glycoside hydrolase family 3 C-terminal domain"/>
    <property type="match status" value="1"/>
</dbReference>
<dbReference type="Gene3D" id="3.20.20.300">
    <property type="entry name" value="Glycoside hydrolase, family 3, N-terminal domain"/>
    <property type="match status" value="1"/>
</dbReference>
<dbReference type="Gene3D" id="2.60.40.10">
    <property type="entry name" value="Immunoglobulins"/>
    <property type="match status" value="1"/>
</dbReference>
<dbReference type="InterPro" id="IPR050288">
    <property type="entry name" value="Cellulose_deg_GH3"/>
</dbReference>
<dbReference type="InterPro" id="IPR026891">
    <property type="entry name" value="Fn3-like"/>
</dbReference>
<dbReference type="InterPro" id="IPR002772">
    <property type="entry name" value="Glyco_hydro_3_C"/>
</dbReference>
<dbReference type="InterPro" id="IPR036881">
    <property type="entry name" value="Glyco_hydro_3_C_sf"/>
</dbReference>
<dbReference type="InterPro" id="IPR001764">
    <property type="entry name" value="Glyco_hydro_3_N"/>
</dbReference>
<dbReference type="InterPro" id="IPR036962">
    <property type="entry name" value="Glyco_hydro_3_N_sf"/>
</dbReference>
<dbReference type="InterPro" id="IPR017853">
    <property type="entry name" value="Glycoside_hydrolase_SF"/>
</dbReference>
<dbReference type="InterPro" id="IPR013783">
    <property type="entry name" value="Ig-like_fold"/>
</dbReference>
<dbReference type="PANTHER" id="PTHR42715">
    <property type="entry name" value="BETA-GLUCOSIDASE"/>
    <property type="match status" value="1"/>
</dbReference>
<dbReference type="PANTHER" id="PTHR42715:SF5">
    <property type="entry name" value="BETA-GLUCOSIDASE M-RELATED"/>
    <property type="match status" value="1"/>
</dbReference>
<dbReference type="Pfam" id="PF14310">
    <property type="entry name" value="Fn3-like"/>
    <property type="match status" value="1"/>
</dbReference>
<dbReference type="Pfam" id="PF00933">
    <property type="entry name" value="Glyco_hydro_3"/>
    <property type="match status" value="1"/>
</dbReference>
<dbReference type="Pfam" id="PF01915">
    <property type="entry name" value="Glyco_hydro_3_C"/>
    <property type="match status" value="1"/>
</dbReference>
<dbReference type="PRINTS" id="PR00133">
    <property type="entry name" value="GLHYDRLASE3"/>
</dbReference>
<dbReference type="SMART" id="SM01217">
    <property type="entry name" value="Fn3_like"/>
    <property type="match status" value="1"/>
</dbReference>
<dbReference type="SUPFAM" id="SSF51445">
    <property type="entry name" value="(Trans)glycosidases"/>
    <property type="match status" value="1"/>
</dbReference>
<dbReference type="SUPFAM" id="SSF52279">
    <property type="entry name" value="Beta-D-glucan exohydrolase, C-terminal domain"/>
    <property type="match status" value="1"/>
</dbReference>
<protein>
    <recommendedName>
        <fullName>Probable beta-glucosidase M</fullName>
        <ecNumber>3.2.1.21</ecNumber>
    </recommendedName>
    <alternativeName>
        <fullName>Beta-D-glucoside glucohydrolase M</fullName>
    </alternativeName>
    <alternativeName>
        <fullName>Cellobiase M</fullName>
    </alternativeName>
    <alternativeName>
        <fullName>Gentiobiase M</fullName>
    </alternativeName>
</protein>
<keyword id="KW-0119">Carbohydrate metabolism</keyword>
<keyword id="KW-0136">Cellulose degradation</keyword>
<keyword id="KW-0325">Glycoprotein</keyword>
<keyword id="KW-0326">Glycosidase</keyword>
<keyword id="KW-0378">Hydrolase</keyword>
<keyword id="KW-0624">Polysaccharide degradation</keyword>
<keyword id="KW-1185">Reference proteome</keyword>
<keyword id="KW-0964">Secreted</keyword>
<keyword id="KW-0732">Signal</keyword>
<proteinExistence type="inferred from homology"/>
<comment type="function">
    <text evidence="1">Beta-glucosidases are one of a number of cellulolytic enzymes involved in the degradation of cellulosic biomass. Catalyzes the last step releasing glucose from the inhibitory cellobiose (By similarity).</text>
</comment>
<comment type="catalytic activity">
    <reaction>
        <text>Hydrolysis of terminal, non-reducing beta-D-glucosyl residues with release of beta-D-glucose.</text>
        <dbReference type="EC" id="3.2.1.21"/>
    </reaction>
</comment>
<comment type="pathway">
    <text>Glycan metabolism; cellulose degradation.</text>
</comment>
<comment type="subcellular location">
    <subcellularLocation>
        <location evidence="1">Secreted</location>
    </subcellularLocation>
</comment>
<comment type="similarity">
    <text evidence="3">Belongs to the glycosyl hydrolase 3 family.</text>
</comment>
<accession>A1D122</accession>
<sequence length="769" mass="82416">MHSNLGLAGLAGLLATASVCLSAPADQNITSDTYCYGQSPPVYPSPEGSGTGSWAAAYAKAKNFVAQLTPEEKVNLTAGTDANNGCSGNIAAIPRLNFPGLCVSDAGNGLRGTDYVSSWPSGLHVGASWSKALAKQRAIHMAKEFRKKGVNVILGPVVGPLGRVAEAGRNWEGFSNDPYLSGALVYETVDGAQSVGVATCTKHYILNEQETNRNPGTEDGVDIAAVSSNIDDKTMHELYLWPFQDAVLAGSASIMCSYNRVNNSYGCQNSKTLNGLLKTELGFQGYVMTDWGAQHAGIAGANAGLDMVMPSTETWGANLTTAISNGTMDASRLDDMAIRIIASWYQMNQNSDSPSPGVGMPTNMYAPHQRVIGREASSKQTLLRGAIEGHVLVKNTNSALPLKSPQLLSVFGYDAKGPDALKQNFNWLSYSPAIQENHTLWVGGGSGANNAAYVDAPIDAIKRQAYEDGTSVLYDLSSEDPDVDPTTDACLVFINSYATEGWDRPGLADKSSDSLVKNVAGKCANTIVTIHNAGIRVIGDWIDHENVTAVIFAHLPGQDSGRALVELLYGRANPSGKLPYTVAKKAEDYGSLLHPSLPETPYGLFPQSDFDEGVYIDYRAFDKANITPQFEFGFGLSYTAFEYSGLRISNPKKSPQYPPSAAIQQGGNPHLWDKTVTVSAEVKNTGRVAGAEVAQLYIGIPNGPVRQLRGFEKVDVSAGETTQVKFALNRRDLSTWDVEAQQWSLQRGTYRVYVGRSSRDLPLTGSFTL</sequence>
<gene>
    <name type="primary">bglM</name>
    <name type="ORF">NFIA_007920</name>
</gene>
<evidence type="ECO:0000250" key="1"/>
<evidence type="ECO:0000255" key="2"/>
<evidence type="ECO:0000305" key="3"/>
<name>BGLM_NEOFI</name>
<organism>
    <name type="scientific">Neosartorya fischeri (strain ATCC 1020 / DSM 3700 / CBS 544.65 / FGSC A1164 / JCM 1740 / NRRL 181 / WB 181)</name>
    <name type="common">Aspergillus fischerianus</name>
    <dbReference type="NCBI Taxonomy" id="331117"/>
    <lineage>
        <taxon>Eukaryota</taxon>
        <taxon>Fungi</taxon>
        <taxon>Dikarya</taxon>
        <taxon>Ascomycota</taxon>
        <taxon>Pezizomycotina</taxon>
        <taxon>Eurotiomycetes</taxon>
        <taxon>Eurotiomycetidae</taxon>
        <taxon>Eurotiales</taxon>
        <taxon>Aspergillaceae</taxon>
        <taxon>Aspergillus</taxon>
        <taxon>Aspergillus subgen. Fumigati</taxon>
    </lineage>
</organism>
<reference key="1">
    <citation type="journal article" date="2008" name="PLoS Genet.">
        <title>Genomic islands in the pathogenic filamentous fungus Aspergillus fumigatus.</title>
        <authorList>
            <person name="Fedorova N.D."/>
            <person name="Khaldi N."/>
            <person name="Joardar V.S."/>
            <person name="Maiti R."/>
            <person name="Amedeo P."/>
            <person name="Anderson M.J."/>
            <person name="Crabtree J."/>
            <person name="Silva J.C."/>
            <person name="Badger J.H."/>
            <person name="Albarraq A."/>
            <person name="Angiuoli S."/>
            <person name="Bussey H."/>
            <person name="Bowyer P."/>
            <person name="Cotty P.J."/>
            <person name="Dyer P.S."/>
            <person name="Egan A."/>
            <person name="Galens K."/>
            <person name="Fraser-Liggett C.M."/>
            <person name="Haas B.J."/>
            <person name="Inman J.M."/>
            <person name="Kent R."/>
            <person name="Lemieux S."/>
            <person name="Malavazi I."/>
            <person name="Orvis J."/>
            <person name="Roemer T."/>
            <person name="Ronning C.M."/>
            <person name="Sundaram J.P."/>
            <person name="Sutton G."/>
            <person name="Turner G."/>
            <person name="Venter J.C."/>
            <person name="White O.R."/>
            <person name="Whitty B.R."/>
            <person name="Youngman P."/>
            <person name="Wolfe K.H."/>
            <person name="Goldman G.H."/>
            <person name="Wortman J.R."/>
            <person name="Jiang B."/>
            <person name="Denning D.W."/>
            <person name="Nierman W.C."/>
        </authorList>
    </citation>
    <scope>NUCLEOTIDE SEQUENCE [LARGE SCALE GENOMIC DNA]</scope>
    <source>
        <strain>ATCC 1020 / DSM 3700 / CBS 544.65 / FGSC A1164 / JCM 1740 / NRRL 181 / WB 181</strain>
    </source>
</reference>
<feature type="signal peptide" evidence="2">
    <location>
        <begin position="1"/>
        <end position="22"/>
    </location>
</feature>
<feature type="chain" id="PRO_0000394910" description="Probable beta-glucosidase M">
    <location>
        <begin position="23"/>
        <end position="769"/>
    </location>
</feature>
<feature type="active site" evidence="1">
    <location>
        <position position="290"/>
    </location>
</feature>
<feature type="glycosylation site" description="N-linked (GlcNAc...) asparagine" evidence="2">
    <location>
        <position position="28"/>
    </location>
</feature>
<feature type="glycosylation site" description="N-linked (GlcNAc...) asparagine" evidence="2">
    <location>
        <position position="75"/>
    </location>
</feature>
<feature type="glycosylation site" description="N-linked (GlcNAc...) asparagine" evidence="2">
    <location>
        <position position="262"/>
    </location>
</feature>
<feature type="glycosylation site" description="N-linked (GlcNAc...) asparagine" evidence="2">
    <location>
        <position position="318"/>
    </location>
</feature>
<feature type="glycosylation site" description="N-linked (GlcNAc...) asparagine" evidence="2">
    <location>
        <position position="325"/>
    </location>
</feature>
<feature type="glycosylation site" description="N-linked (GlcNAc...) asparagine" evidence="2">
    <location>
        <position position="437"/>
    </location>
</feature>
<feature type="glycosylation site" description="N-linked (GlcNAc...) asparagine" evidence="2">
    <location>
        <position position="546"/>
    </location>
</feature>